<keyword id="KW-0963">Cytoplasm</keyword>
<keyword id="KW-0539">Nucleus</keyword>
<keyword id="KW-0647">Proteasome</keyword>
<keyword id="KW-1185">Reference proteome</keyword>
<name>PSA2_CAEEL</name>
<reference key="1">
    <citation type="journal article" date="1998" name="Science">
        <title>Genome sequence of the nematode C. elegans: a platform for investigating biology.</title>
        <authorList>
            <consortium name="The C. elegans sequencing consortium"/>
        </authorList>
    </citation>
    <scope>NUCLEOTIDE SEQUENCE [LARGE SCALE GENOMIC DNA]</scope>
    <source>
        <strain>Bristol N2</strain>
    </source>
</reference>
<organism>
    <name type="scientific">Caenorhabditis elegans</name>
    <dbReference type="NCBI Taxonomy" id="6239"/>
    <lineage>
        <taxon>Eukaryota</taxon>
        <taxon>Metazoa</taxon>
        <taxon>Ecdysozoa</taxon>
        <taxon>Nematoda</taxon>
        <taxon>Chromadorea</taxon>
        <taxon>Rhabditida</taxon>
        <taxon>Rhabditina</taxon>
        <taxon>Rhabditomorpha</taxon>
        <taxon>Rhabditoidea</taxon>
        <taxon>Rhabditidae</taxon>
        <taxon>Peloderinae</taxon>
        <taxon>Caenorhabditis</taxon>
    </lineage>
</organism>
<dbReference type="EMBL" id="Z74030">
    <property type="protein sequence ID" value="CAA98441.1"/>
    <property type="molecule type" value="Genomic_DNA"/>
</dbReference>
<dbReference type="PIR" id="T20304">
    <property type="entry name" value="T20304"/>
</dbReference>
<dbReference type="RefSeq" id="NP_505750.1">
    <property type="nucleotide sequence ID" value="NM_073349.9"/>
</dbReference>
<dbReference type="SMR" id="Q27488"/>
<dbReference type="BioGRID" id="44522">
    <property type="interactions" value="51"/>
</dbReference>
<dbReference type="FunCoup" id="Q27488">
    <property type="interactions" value="2751"/>
</dbReference>
<dbReference type="IntAct" id="Q27488">
    <property type="interactions" value="15"/>
</dbReference>
<dbReference type="STRING" id="6239.D1054.2.2"/>
<dbReference type="MEROPS" id="T01.972"/>
<dbReference type="PaxDb" id="6239-D1054.2.2"/>
<dbReference type="PeptideAtlas" id="Q27488"/>
<dbReference type="EnsemblMetazoa" id="D1054.2.1">
    <property type="protein sequence ID" value="D1054.2.1"/>
    <property type="gene ID" value="WBGene00003923"/>
</dbReference>
<dbReference type="GeneID" id="179493"/>
<dbReference type="KEGG" id="cel:CELE_D1054.2"/>
<dbReference type="UCSC" id="D1054.2.1">
    <property type="organism name" value="c. elegans"/>
</dbReference>
<dbReference type="AGR" id="WB:WBGene00003923"/>
<dbReference type="CTD" id="179493"/>
<dbReference type="WormBase" id="D1054.2">
    <property type="protein sequence ID" value="CE05521"/>
    <property type="gene ID" value="WBGene00003923"/>
    <property type="gene designation" value="pas-2"/>
</dbReference>
<dbReference type="eggNOG" id="KOG0181">
    <property type="taxonomic scope" value="Eukaryota"/>
</dbReference>
<dbReference type="GeneTree" id="ENSGT00550000074870"/>
<dbReference type="HOGENOM" id="CLU_035750_4_1_1"/>
<dbReference type="InParanoid" id="Q27488"/>
<dbReference type="OMA" id="ATCIGKD"/>
<dbReference type="OrthoDB" id="431557at2759"/>
<dbReference type="PhylomeDB" id="Q27488"/>
<dbReference type="Reactome" id="R-CEL-1234176">
    <property type="pathway name" value="Oxygen-dependent proline hydroxylation of Hypoxia-inducible Factor Alpha"/>
</dbReference>
<dbReference type="Reactome" id="R-CEL-1236978">
    <property type="pathway name" value="Cross-presentation of soluble exogenous antigens (endosomes)"/>
</dbReference>
<dbReference type="Reactome" id="R-CEL-187577">
    <property type="pathway name" value="SCF(Skp2)-mediated degradation of p27/p21"/>
</dbReference>
<dbReference type="Reactome" id="R-CEL-195253">
    <property type="pathway name" value="Degradation of beta-catenin by the destruction complex"/>
</dbReference>
<dbReference type="Reactome" id="R-CEL-349425">
    <property type="pathway name" value="Autodegradation of the E3 ubiquitin ligase COP1"/>
</dbReference>
<dbReference type="Reactome" id="R-CEL-350562">
    <property type="pathway name" value="Regulation of ornithine decarboxylase (ODC)"/>
</dbReference>
<dbReference type="Reactome" id="R-CEL-382556">
    <property type="pathway name" value="ABC-family proteins mediated transport"/>
</dbReference>
<dbReference type="Reactome" id="R-CEL-4608870">
    <property type="pathway name" value="Asymmetric localization of PCP proteins"/>
</dbReference>
<dbReference type="Reactome" id="R-CEL-4641258">
    <property type="pathway name" value="Degradation of DVL"/>
</dbReference>
<dbReference type="Reactome" id="R-CEL-5632684">
    <property type="pathway name" value="Hedgehog 'on' state"/>
</dbReference>
<dbReference type="Reactome" id="R-CEL-5687128">
    <property type="pathway name" value="MAPK6/MAPK4 signaling"/>
</dbReference>
<dbReference type="Reactome" id="R-CEL-5689603">
    <property type="pathway name" value="UCH proteinases"/>
</dbReference>
<dbReference type="Reactome" id="R-CEL-5689880">
    <property type="pathway name" value="Ub-specific processing proteases"/>
</dbReference>
<dbReference type="Reactome" id="R-CEL-6798695">
    <property type="pathway name" value="Neutrophil degranulation"/>
</dbReference>
<dbReference type="Reactome" id="R-CEL-68949">
    <property type="pathway name" value="Orc1 removal from chromatin"/>
</dbReference>
<dbReference type="Reactome" id="R-CEL-69017">
    <property type="pathway name" value="CDK-mediated phosphorylation and removal of Cdc6"/>
</dbReference>
<dbReference type="Reactome" id="R-CEL-69601">
    <property type="pathway name" value="Ubiquitin Mediated Degradation of Phosphorylated Cdc25A"/>
</dbReference>
<dbReference type="Reactome" id="R-CEL-75815">
    <property type="pathway name" value="Ubiquitin-dependent degradation of Cyclin D"/>
</dbReference>
<dbReference type="Reactome" id="R-CEL-8854050">
    <property type="pathway name" value="FBXL7 down-regulates AURKA during mitotic entry and in early mitosis"/>
</dbReference>
<dbReference type="Reactome" id="R-CEL-8939902">
    <property type="pathway name" value="Regulation of RUNX2 expression and activity"/>
</dbReference>
<dbReference type="Reactome" id="R-CEL-8941858">
    <property type="pathway name" value="Regulation of RUNX3 expression and activity"/>
</dbReference>
<dbReference type="Reactome" id="R-CEL-8948751">
    <property type="pathway name" value="Regulation of PTEN stability and activity"/>
</dbReference>
<dbReference type="Reactome" id="R-CEL-8951664">
    <property type="pathway name" value="Neddylation"/>
</dbReference>
<dbReference type="Reactome" id="R-CEL-9755511">
    <property type="pathway name" value="KEAP1-NFE2L2 pathway"/>
</dbReference>
<dbReference type="Reactome" id="R-CEL-9762114">
    <property type="pathway name" value="GSK3B and BTRC:CUL1-mediated-degradation of NFE2L2"/>
</dbReference>
<dbReference type="Reactome" id="R-CEL-983168">
    <property type="pathway name" value="Antigen processing: Ubiquitination &amp; Proteasome degradation"/>
</dbReference>
<dbReference type="Reactome" id="R-CEL-9907900">
    <property type="pathway name" value="Proteasome assembly"/>
</dbReference>
<dbReference type="PRO" id="PR:Q27488"/>
<dbReference type="Proteomes" id="UP000001940">
    <property type="component" value="Chromosome V"/>
</dbReference>
<dbReference type="Bgee" id="WBGene00003923">
    <property type="expression patterns" value="Expressed in germ line (C elegans) and 4 other cell types or tissues"/>
</dbReference>
<dbReference type="GO" id="GO:0005737">
    <property type="term" value="C:cytoplasm"/>
    <property type="evidence" value="ECO:0007669"/>
    <property type="project" value="UniProtKB-SubCell"/>
</dbReference>
<dbReference type="GO" id="GO:0005634">
    <property type="term" value="C:nucleus"/>
    <property type="evidence" value="ECO:0007669"/>
    <property type="project" value="UniProtKB-SubCell"/>
</dbReference>
<dbReference type="GO" id="GO:0019773">
    <property type="term" value="C:proteasome core complex, alpha-subunit complex"/>
    <property type="evidence" value="ECO:0000250"/>
    <property type="project" value="UniProtKB"/>
</dbReference>
<dbReference type="GO" id="GO:0042802">
    <property type="term" value="F:identical protein binding"/>
    <property type="evidence" value="ECO:0000353"/>
    <property type="project" value="IntAct"/>
</dbReference>
<dbReference type="GO" id="GO:0043161">
    <property type="term" value="P:proteasome-mediated ubiquitin-dependent protein catabolic process"/>
    <property type="evidence" value="ECO:0000318"/>
    <property type="project" value="GO_Central"/>
</dbReference>
<dbReference type="CDD" id="cd03750">
    <property type="entry name" value="proteasome_alpha_type_2"/>
    <property type="match status" value="1"/>
</dbReference>
<dbReference type="FunFam" id="3.60.20.10:FF:000012">
    <property type="entry name" value="Proteasome subunit alpha type"/>
    <property type="match status" value="1"/>
</dbReference>
<dbReference type="Gene3D" id="3.60.20.10">
    <property type="entry name" value="Glutamine Phosphoribosylpyrophosphate, subunit 1, domain 1"/>
    <property type="match status" value="1"/>
</dbReference>
<dbReference type="InterPro" id="IPR029055">
    <property type="entry name" value="Ntn_hydrolases_N"/>
</dbReference>
<dbReference type="InterPro" id="IPR050115">
    <property type="entry name" value="Proteasome_alpha"/>
</dbReference>
<dbReference type="InterPro" id="IPR023332">
    <property type="entry name" value="Proteasome_alpha-type"/>
</dbReference>
<dbReference type="InterPro" id="IPR000426">
    <property type="entry name" value="Proteasome_asu_N"/>
</dbReference>
<dbReference type="InterPro" id="IPR001353">
    <property type="entry name" value="Proteasome_sua/b"/>
</dbReference>
<dbReference type="PANTHER" id="PTHR11599">
    <property type="entry name" value="PROTEASOME SUBUNIT ALPHA/BETA"/>
    <property type="match status" value="1"/>
</dbReference>
<dbReference type="Pfam" id="PF00227">
    <property type="entry name" value="Proteasome"/>
    <property type="match status" value="1"/>
</dbReference>
<dbReference type="Pfam" id="PF10584">
    <property type="entry name" value="Proteasome_A_N"/>
    <property type="match status" value="1"/>
</dbReference>
<dbReference type="SMART" id="SM00948">
    <property type="entry name" value="Proteasome_A_N"/>
    <property type="match status" value="1"/>
</dbReference>
<dbReference type="SUPFAM" id="SSF56235">
    <property type="entry name" value="N-terminal nucleophile aminohydrolases (Ntn hydrolases)"/>
    <property type="match status" value="1"/>
</dbReference>
<dbReference type="PROSITE" id="PS00388">
    <property type="entry name" value="PROTEASOME_ALPHA_1"/>
    <property type="match status" value="1"/>
</dbReference>
<dbReference type="PROSITE" id="PS51475">
    <property type="entry name" value="PROTEASOME_ALPHA_2"/>
    <property type="match status" value="1"/>
</dbReference>
<sequence length="231" mass="25336">MGDHYGFSLTTFSPSGKLMQIEYALNAVKNGQPSVGLRAKDGVVLATENVGSVLTDDQPKVEQISKHIGCVYSGMGPDFRILVKKARKIAMEYEMMYGEEMPTIQLVTDIAAVMQEYTQSGGVRPFGASLLIAGWDKNPGRPLLFQCDPSGAYFAWKATALGKNDVNAKTFLEKRFSEALELDDGIHTALLTLRESFDVGMNENNVEVAVCNSTGFHRLTKQQVHDHLGTL</sequence>
<feature type="chain" id="PRO_0000124082" description="Proteasome subunit alpha type-2">
    <location>
        <begin position="1"/>
        <end position="231"/>
    </location>
</feature>
<accession>Q27488</accession>
<protein>
    <recommendedName>
        <fullName>Proteasome subunit alpha type-2</fullName>
        <shortName>Proteasome subunit alpha 2</shortName>
    </recommendedName>
</protein>
<proteinExistence type="evidence at protein level"/>
<comment type="function">
    <text evidence="1">The proteasome is a multicatalytic proteinase complex which is characterized by its ability to cleave peptides with Arg, Phe, Tyr, Leu, and Glu adjacent to the leaving group at neutral or slightly basic pH. The proteasome has an ATP-dependent proteolytic activity (By similarity).</text>
</comment>
<comment type="subunit">
    <text evidence="1">The 26S proteasome consists of a 20S proteasome core and two 19S regulatory subunits. The 20S proteasome core is composed of 28 subunits that are arranged in four stacked rings, resulting in a barrel-shaped structure. The two end rings are each formed by seven alpha subunits, and the two central rings are each formed by seven beta subunits. The catalytic chamber with the active sites is on the inside of the barrel (By similarity).</text>
</comment>
<comment type="interaction">
    <interactant intactId="EBI-318271">
        <id>Q27488</id>
    </interactant>
    <interactant intactId="EBI-316816">
        <id>Q94392</id>
        <label>nsf-1</label>
    </interactant>
    <organismsDiffer>false</organismsDiffer>
    <experiments>3</experiments>
</comment>
<comment type="interaction">
    <interactant intactId="EBI-318271">
        <id>Q27488</id>
    </interactant>
    <interactant intactId="EBI-318271">
        <id>Q27488</id>
        <label>pas-2</label>
    </interactant>
    <organismsDiffer>false</organismsDiffer>
    <experiments>3</experiments>
</comment>
<comment type="interaction">
    <interactant intactId="EBI-318271">
        <id>Q27488</id>
    </interactant>
    <interactant intactId="EBI-318264">
        <id>O44156</id>
        <label>pas-6</label>
    </interactant>
    <organismsDiffer>false</organismsDiffer>
    <experiments>3</experiments>
</comment>
<comment type="subcellular location">
    <subcellularLocation>
        <location evidence="1">Cytoplasm</location>
    </subcellularLocation>
    <subcellularLocation>
        <location evidence="1">Nucleus</location>
    </subcellularLocation>
</comment>
<comment type="similarity">
    <text evidence="2">Belongs to the peptidase T1A family.</text>
</comment>
<evidence type="ECO:0000250" key="1"/>
<evidence type="ECO:0000255" key="2">
    <source>
        <dbReference type="PROSITE-ProRule" id="PRU00808"/>
    </source>
</evidence>
<gene>
    <name type="primary">pas-2</name>
    <name type="ORF">D1054.2</name>
</gene>